<feature type="signal peptide" evidence="3">
    <location>
        <begin position="1"/>
        <end position="28"/>
    </location>
</feature>
<feature type="chain" id="PRO_5035036113" description="Secretogranin-2b" evidence="3">
    <location>
        <begin position="29"/>
        <end position="583"/>
    </location>
</feature>
<feature type="peptide" id="PRO_0000456833" description="Secretoneurin-b" evidence="2">
    <location>
        <begin position="181"/>
        <end position="211"/>
    </location>
</feature>
<feature type="region of interest" description="Disordered" evidence="4">
    <location>
        <begin position="123"/>
        <end position="159"/>
    </location>
</feature>
<feature type="region of interest" description="Disordered" evidence="4">
    <location>
        <begin position="526"/>
        <end position="583"/>
    </location>
</feature>
<feature type="compositionally biased region" description="Basic and acidic residues" evidence="4">
    <location>
        <begin position="534"/>
        <end position="546"/>
    </location>
</feature>
<organism evidence="10">
    <name type="scientific">Danio rerio</name>
    <name type="common">Zebrafish</name>
    <name type="synonym">Brachydanio rerio</name>
    <dbReference type="NCBI Taxonomy" id="7955"/>
    <lineage>
        <taxon>Eukaryota</taxon>
        <taxon>Metazoa</taxon>
        <taxon>Chordata</taxon>
        <taxon>Craniata</taxon>
        <taxon>Vertebrata</taxon>
        <taxon>Euteleostomi</taxon>
        <taxon>Actinopterygii</taxon>
        <taxon>Neopterygii</taxon>
        <taxon>Teleostei</taxon>
        <taxon>Ostariophysi</taxon>
        <taxon>Cypriniformes</taxon>
        <taxon>Danionidae</taxon>
        <taxon>Danioninae</taxon>
        <taxon>Danio</taxon>
    </lineage>
</organism>
<gene>
    <name evidence="9" type="primary">scg2b</name>
    <name evidence="7" type="synonym">SgIIb</name>
    <name evidence="10" type="ORF">zgc:153925</name>
</gene>
<name>SCG2B_DANRE</name>
<protein>
    <recommendedName>
        <fullName evidence="9">Secretogranin-2b</fullName>
    </recommendedName>
    <alternativeName>
        <fullName evidence="7">Secretogranin II b</fullName>
    </alternativeName>
    <component>
        <recommendedName>
            <fullName evidence="8">Secretoneurin-b</fullName>
            <shortName evidence="8">SNb</shortName>
        </recommendedName>
    </component>
</protein>
<accession>A0JMK6</accession>
<accession>B2GPN7</accession>
<dbReference type="EMBL" id="CU467824">
    <property type="status" value="NOT_ANNOTATED_CDS"/>
    <property type="molecule type" value="Genomic_DNA"/>
</dbReference>
<dbReference type="EMBL" id="BC125913">
    <property type="protein sequence ID" value="AAI25914.1"/>
    <property type="molecule type" value="mRNA"/>
</dbReference>
<dbReference type="EMBL" id="BC164414">
    <property type="protein sequence ID" value="AAI64414.1"/>
    <property type="molecule type" value="mRNA"/>
</dbReference>
<dbReference type="RefSeq" id="NP_001071216.1">
    <property type="nucleotide sequence ID" value="NM_001077748.1"/>
</dbReference>
<dbReference type="RefSeq" id="XP_068068956.1">
    <property type="nucleotide sequence ID" value="XM_068212855.1"/>
</dbReference>
<dbReference type="FunCoup" id="A0JMK6">
    <property type="interactions" value="1490"/>
</dbReference>
<dbReference type="STRING" id="7955.ENSDARP00000099613"/>
<dbReference type="PaxDb" id="7955-ENSDARP00000099613"/>
<dbReference type="Ensembl" id="ENSDART00000112579">
    <property type="protein sequence ID" value="ENSDARP00000099613"/>
    <property type="gene ID" value="ENSDARG00000038574"/>
</dbReference>
<dbReference type="Ensembl" id="ENSDART00000187579">
    <property type="protein sequence ID" value="ENSDARP00000154471"/>
    <property type="gene ID" value="ENSDARG00000038574"/>
</dbReference>
<dbReference type="GeneID" id="777641"/>
<dbReference type="KEGG" id="dre:777641"/>
<dbReference type="AGR" id="ZFIN:ZDB-GENE-061103-160"/>
<dbReference type="CTD" id="777641"/>
<dbReference type="ZFIN" id="ZDB-GENE-061103-160">
    <property type="gene designation" value="scg2b"/>
</dbReference>
<dbReference type="eggNOG" id="ENOG502QV5W">
    <property type="taxonomic scope" value="Eukaryota"/>
</dbReference>
<dbReference type="HOGENOM" id="CLU_031294_0_0_1"/>
<dbReference type="InParanoid" id="A0JMK6"/>
<dbReference type="OMA" id="MSDQTQK"/>
<dbReference type="OrthoDB" id="8894600at2759"/>
<dbReference type="TreeFam" id="TF334018"/>
<dbReference type="PRO" id="PR:A0JMK6"/>
<dbReference type="Proteomes" id="UP000000437">
    <property type="component" value="Chromosome 2"/>
</dbReference>
<dbReference type="Bgee" id="ENSDARG00000038574">
    <property type="expression patterns" value="Expressed in brain and 12 other cell types or tissues"/>
</dbReference>
<dbReference type="ExpressionAtlas" id="A0JMK6">
    <property type="expression patterns" value="baseline and differential"/>
</dbReference>
<dbReference type="GO" id="GO:0005576">
    <property type="term" value="C:extracellular region"/>
    <property type="evidence" value="ECO:0007669"/>
    <property type="project" value="UniProtKB-SubCell"/>
</dbReference>
<dbReference type="GO" id="GO:0030141">
    <property type="term" value="C:secretory granule"/>
    <property type="evidence" value="ECO:0007669"/>
    <property type="project" value="InterPro"/>
</dbReference>
<dbReference type="GO" id="GO:0001525">
    <property type="term" value="P:angiogenesis"/>
    <property type="evidence" value="ECO:0007669"/>
    <property type="project" value="UniProtKB-KW"/>
</dbReference>
<dbReference type="GO" id="GO:1903670">
    <property type="term" value="P:regulation of sprouting angiogenesis"/>
    <property type="evidence" value="ECO:0000315"/>
    <property type="project" value="ZFIN"/>
</dbReference>
<dbReference type="InterPro" id="IPR001990">
    <property type="entry name" value="Granin"/>
</dbReference>
<dbReference type="InterPro" id="IPR038858">
    <property type="entry name" value="ScgII"/>
</dbReference>
<dbReference type="PANTHER" id="PTHR15119">
    <property type="entry name" value="SECRETOGRANIN II"/>
    <property type="match status" value="1"/>
</dbReference>
<dbReference type="PANTHER" id="PTHR15119:SF0">
    <property type="entry name" value="SECRETOGRANIN-2"/>
    <property type="match status" value="1"/>
</dbReference>
<dbReference type="Pfam" id="PF01271">
    <property type="entry name" value="Granin"/>
    <property type="match status" value="1"/>
</dbReference>
<reference evidence="9" key="1">
    <citation type="journal article" date="2013" name="Nature">
        <title>The zebrafish reference genome sequence and its relationship to the human genome.</title>
        <authorList>
            <person name="Howe K."/>
            <person name="Clark M.D."/>
            <person name="Torroja C.F."/>
            <person name="Torrance J."/>
            <person name="Berthelot C."/>
            <person name="Muffato M."/>
            <person name="Collins J.E."/>
            <person name="Humphray S."/>
            <person name="McLaren K."/>
            <person name="Matthews L."/>
            <person name="McLaren S."/>
            <person name="Sealy I."/>
            <person name="Caccamo M."/>
            <person name="Churcher C."/>
            <person name="Scott C."/>
            <person name="Barrett J.C."/>
            <person name="Koch R."/>
            <person name="Rauch G.J."/>
            <person name="White S."/>
            <person name="Chow W."/>
            <person name="Kilian B."/>
            <person name="Quintais L.T."/>
            <person name="Guerra-Assuncao J.A."/>
            <person name="Zhou Y."/>
            <person name="Gu Y."/>
            <person name="Yen J."/>
            <person name="Vogel J.H."/>
            <person name="Eyre T."/>
            <person name="Redmond S."/>
            <person name="Banerjee R."/>
            <person name="Chi J."/>
            <person name="Fu B."/>
            <person name="Langley E."/>
            <person name="Maguire S.F."/>
            <person name="Laird G.K."/>
            <person name="Lloyd D."/>
            <person name="Kenyon E."/>
            <person name="Donaldson S."/>
            <person name="Sehra H."/>
            <person name="Almeida-King J."/>
            <person name="Loveland J."/>
            <person name="Trevanion S."/>
            <person name="Jones M."/>
            <person name="Quail M."/>
            <person name="Willey D."/>
            <person name="Hunt A."/>
            <person name="Burton J."/>
            <person name="Sims S."/>
            <person name="McLay K."/>
            <person name="Plumb B."/>
            <person name="Davis J."/>
            <person name="Clee C."/>
            <person name="Oliver K."/>
            <person name="Clark R."/>
            <person name="Riddle C."/>
            <person name="Elliot D."/>
            <person name="Threadgold G."/>
            <person name="Harden G."/>
            <person name="Ware D."/>
            <person name="Begum S."/>
            <person name="Mortimore B."/>
            <person name="Kerry G."/>
            <person name="Heath P."/>
            <person name="Phillimore B."/>
            <person name="Tracey A."/>
            <person name="Corby N."/>
            <person name="Dunn M."/>
            <person name="Johnson C."/>
            <person name="Wood J."/>
            <person name="Clark S."/>
            <person name="Pelan S."/>
            <person name="Griffiths G."/>
            <person name="Smith M."/>
            <person name="Glithero R."/>
            <person name="Howden P."/>
            <person name="Barker N."/>
            <person name="Lloyd C."/>
            <person name="Stevens C."/>
            <person name="Harley J."/>
            <person name="Holt K."/>
            <person name="Panagiotidis G."/>
            <person name="Lovell J."/>
            <person name="Beasley H."/>
            <person name="Henderson C."/>
            <person name="Gordon D."/>
            <person name="Auger K."/>
            <person name="Wright D."/>
            <person name="Collins J."/>
            <person name="Raisen C."/>
            <person name="Dyer L."/>
            <person name="Leung K."/>
            <person name="Robertson L."/>
            <person name="Ambridge K."/>
            <person name="Leongamornlert D."/>
            <person name="McGuire S."/>
            <person name="Gilderthorp R."/>
            <person name="Griffiths C."/>
            <person name="Manthravadi D."/>
            <person name="Nichol S."/>
            <person name="Barker G."/>
            <person name="Whitehead S."/>
            <person name="Kay M."/>
            <person name="Brown J."/>
            <person name="Murnane C."/>
            <person name="Gray E."/>
            <person name="Humphries M."/>
            <person name="Sycamore N."/>
            <person name="Barker D."/>
            <person name="Saunders D."/>
            <person name="Wallis J."/>
            <person name="Babbage A."/>
            <person name="Hammond S."/>
            <person name="Mashreghi-Mohammadi M."/>
            <person name="Barr L."/>
            <person name="Martin S."/>
            <person name="Wray P."/>
            <person name="Ellington A."/>
            <person name="Matthews N."/>
            <person name="Ellwood M."/>
            <person name="Woodmansey R."/>
            <person name="Clark G."/>
            <person name="Cooper J."/>
            <person name="Tromans A."/>
            <person name="Grafham D."/>
            <person name="Skuce C."/>
            <person name="Pandian R."/>
            <person name="Andrews R."/>
            <person name="Harrison E."/>
            <person name="Kimberley A."/>
            <person name="Garnett J."/>
            <person name="Fosker N."/>
            <person name="Hall R."/>
            <person name="Garner P."/>
            <person name="Kelly D."/>
            <person name="Bird C."/>
            <person name="Palmer S."/>
            <person name="Gehring I."/>
            <person name="Berger A."/>
            <person name="Dooley C.M."/>
            <person name="Ersan-Urun Z."/>
            <person name="Eser C."/>
            <person name="Geiger H."/>
            <person name="Geisler M."/>
            <person name="Karotki L."/>
            <person name="Kirn A."/>
            <person name="Konantz J."/>
            <person name="Konantz M."/>
            <person name="Oberlander M."/>
            <person name="Rudolph-Geiger S."/>
            <person name="Teucke M."/>
            <person name="Lanz C."/>
            <person name="Raddatz G."/>
            <person name="Osoegawa K."/>
            <person name="Zhu B."/>
            <person name="Rapp A."/>
            <person name="Widaa S."/>
            <person name="Langford C."/>
            <person name="Yang F."/>
            <person name="Schuster S.C."/>
            <person name="Carter N.P."/>
            <person name="Harrow J."/>
            <person name="Ning Z."/>
            <person name="Herrero J."/>
            <person name="Searle S.M."/>
            <person name="Enright A."/>
            <person name="Geisler R."/>
            <person name="Plasterk R.H."/>
            <person name="Lee C."/>
            <person name="Westerfield M."/>
            <person name="de Jong P.J."/>
            <person name="Zon L.I."/>
            <person name="Postlethwait J.H."/>
            <person name="Nusslein-Volhard C."/>
            <person name="Hubbard T.J."/>
            <person name="Roest Crollius H."/>
            <person name="Rogers J."/>
            <person name="Stemple D.L."/>
        </authorList>
    </citation>
    <scope>NUCLEOTIDE SEQUENCE [LARGE SCALE GENOMIC DNA]</scope>
    <source>
        <strain evidence="9">Tuebingen</strain>
    </source>
</reference>
<reference evidence="10" key="2">
    <citation type="submission" date="2008-04" db="EMBL/GenBank/DDBJ databases">
        <authorList>
            <consortium name="NIH - Zebrafish Gene Collection (ZGC) project"/>
        </authorList>
    </citation>
    <scope>NUCLEOTIDE SEQUENCE [LARGE SCALE MRNA]</scope>
</reference>
<reference evidence="9" key="3">
    <citation type="journal article" date="2018" name="J. Mol. Cell Biol.">
        <title>Secretogranin-II plays a critical role in zebrafish neurovascular modeling.</title>
        <authorList>
            <person name="Tao B."/>
            <person name="Hu H."/>
            <person name="Mitchell K."/>
            <person name="Chen J."/>
            <person name="Jia H."/>
            <person name="Zhu Z."/>
            <person name="Trudeau V.L."/>
            <person name="Hu W."/>
        </authorList>
    </citation>
    <scope>FUNCTION</scope>
    <scope>DEVELOPMENTAL STAGE</scope>
    <scope>DISRUPTION PHENOTYPE</scope>
</reference>
<reference evidence="9" key="4">
    <citation type="journal article" date="2020" name="Proc. Natl. Acad. Sci. U.S.A.">
        <title>Targeted mutation of secretogranin-2 disrupts sexual behavior and reproduction in zebrafish.</title>
        <authorList>
            <person name="Mitchell K."/>
            <person name="Zhang W.S."/>
            <person name="Lu C."/>
            <person name="Tao B."/>
            <person name="Chen L."/>
            <person name="Hu W."/>
            <person name="Trudeau V.L."/>
        </authorList>
    </citation>
    <scope>FUNCTION</scope>
    <scope>DISRUPTION PHENOTYPE</scope>
</reference>
<evidence type="ECO:0000250" key="1">
    <source>
        <dbReference type="UniProtKB" id="P13521"/>
    </source>
</evidence>
<evidence type="ECO:0000250" key="2">
    <source>
        <dbReference type="UniProtKB" id="P30945"/>
    </source>
</evidence>
<evidence type="ECO:0000255" key="3"/>
<evidence type="ECO:0000256" key="4">
    <source>
        <dbReference type="SAM" id="MobiDB-lite"/>
    </source>
</evidence>
<evidence type="ECO:0000269" key="5">
    <source>
    </source>
</evidence>
<evidence type="ECO:0000269" key="6">
    <source>
    </source>
</evidence>
<evidence type="ECO:0000303" key="7">
    <source>
    </source>
</evidence>
<evidence type="ECO:0000303" key="8">
    <source>
    </source>
</evidence>
<evidence type="ECO:0000305" key="9"/>
<evidence type="ECO:0000312" key="10">
    <source>
        <dbReference type="EMBL" id="AAI64414.1"/>
    </source>
</evidence>
<keyword id="KW-0037">Angiogenesis</keyword>
<keyword id="KW-0165">Cleavage on pair of basic residues</keyword>
<keyword id="KW-1185">Reference proteome</keyword>
<keyword id="KW-0964">Secreted</keyword>
<keyword id="KW-0732">Signal</keyword>
<sequence length="583" mass="65921">MMLSLPKLSAGGVVVLLATLLHTLTVQGASVRHHRLRGGDQGGFLAPSSDMIKALEYIESLKQRADGPESPTGDYDEVDKFRFLVQLASLQDENTPTHEDATRWPDNKVPQWVRSLLRVLDQAGESPESQAAGNERRLHKTRRPVADGESPAGDYAGFVKPHKKYPLMFEDEENGRDNKRATEDLDEQYTPQSLANMRSIFEELGKLSAAQKRDDEEDGEDDDDLYRVRNAAYEDVTGGEEWVPLEEQLETEELVKGSHEEYKRALGDISEQGMENMERRGEEEDENPDDDTKLVDYYLLKVLEMTDQAQKRDLMEGRRRLLSRPSLIDPRAIKQLLSAISMKLQVPPEDLVGMLFMEETRKQQQRLPEPQLARNPSQPRYKSRVIKYYNGRQPEVTVSDIPHDVKTEDILKVLGLGNLANKNAKFSLLKQRPYKTAMTNYFNPNGRRGSLFLSELNKAPSKRKDDYDDDDAVDEDEESTFLAAKLLTEYPDTSSSNRKRAIDSAANGQLPYELYEEAMKDFFDQVDNGKSALAKRDTQGKEEPEGPQKPPAQDPAQETVDQTPPESGTEDGKEYHGKIVAGM</sequence>
<comment type="function">
    <text evidence="1 5 6">Neuroendocrine protein of the granin family that regulates the biogenesis of secretory granules (By similarity). Required for neurovascular modeling of the hindbrain (PubMed:29757409). Acts in a non-cell autonomous manner and is required for migration and proliferation of central artery endothelial cells (PubMed:29757409). Required for normal courting behavior and spawning (PubMed:32467166).</text>
</comment>
<comment type="subcellular location">
    <subcellularLocation>
        <location evidence="9">Secreted</location>
    </subcellularLocation>
</comment>
<comment type="developmental stage">
    <text evidence="5">In the embryo, levels are low at 10 hours post-fertilization, then increase over the 14-24 hpf period, and stabilize after 36 hpf (PubMed:29757409). Mainly expressed in the central nervous system at 24 and 36 hpf, and is concentrated in the brain by 45 hpf (PubMed:29757409). Widely distributed around central arteries in the developing hindbrain at 42-45 hpf (PubMed:29757409).</text>
</comment>
<comment type="disruption phenotype">
    <text evidence="5 6">Defective hindbrain central artery development due to impaired migration and proliferation of central artery cells (PubMed:29757409). Activation of the MAPK and PI3K/AKT pathways is inhibited (PubMed:29757409). Hindbrain arterial and venous network identities are not affected and there is no effect on the Notch or VEGF pathways (PubMed:29757409). Decreased courtship behaviors and reduced spawning success (PubMed:32467166). Reduced levels of gnrh3 in the hypothalamus and telencephalon and reduced levels of oxt and avp in the telencephalon (PubMed:32467166). Reduced levels of lhb, cga, fshb and gnrhr2 in the pituitary (PubMed:32467166). Simultaneous knockout of Scg2a and Scg2b results in greatly reduced ovulation in females (PubMed:32467166). Morpholino knockdown results in defective central artery development (PubMed:29757409).</text>
</comment>
<comment type="similarity">
    <text evidence="9">Belongs to the chromogranin/secretogranin protein family.</text>
</comment>
<proteinExistence type="evidence at transcript level"/>